<name>Y920_HELPY</name>
<keyword id="KW-1003">Cell membrane</keyword>
<keyword id="KW-0472">Membrane</keyword>
<keyword id="KW-1185">Reference proteome</keyword>
<keyword id="KW-0812">Transmembrane</keyword>
<keyword id="KW-1133">Transmembrane helix</keyword>
<feature type="chain" id="PRO_0000179105" description="Uncharacterized protein HP_0920">
    <location>
        <begin position="1"/>
        <end position="230"/>
    </location>
</feature>
<feature type="transmembrane region" description="Helical" evidence="1">
    <location>
        <begin position="34"/>
        <end position="54"/>
    </location>
</feature>
<feature type="transmembrane region" description="Helical" evidence="1">
    <location>
        <begin position="56"/>
        <end position="76"/>
    </location>
</feature>
<feature type="transmembrane region" description="Helical" evidence="1">
    <location>
        <begin position="87"/>
        <end position="107"/>
    </location>
</feature>
<feature type="transmembrane region" description="Helical" evidence="1">
    <location>
        <begin position="111"/>
        <end position="131"/>
    </location>
</feature>
<feature type="transmembrane region" description="Helical" evidence="1">
    <location>
        <begin position="146"/>
        <end position="166"/>
    </location>
</feature>
<feature type="transmembrane region" description="Helical" evidence="1">
    <location>
        <begin position="167"/>
        <end position="187"/>
    </location>
</feature>
<feature type="transmembrane region" description="Helical" evidence="1">
    <location>
        <begin position="205"/>
        <end position="225"/>
    </location>
</feature>
<sequence>MALYDRANSRNAYAEDSLLRESELVSFVKTTYKFFAGSLLLATIGALLGLMNFQAVVQYKWVFFIAEIAAFFGLMFSKSKPGLNLFMLFAFTSLSGVTLVPLLGMVIAKAGLGAIWQALGMTTIVFGLMSVYALKTKNDLANMGKMLFIALIVVVVCSLINLFLGSPMFQVVIAGASAILFSLYIAYDTQNIVKGMYDSPIDAAVSLYLDFLNVFISILQIIGIFSDRDT</sequence>
<accession>O25578</accession>
<dbReference type="EMBL" id="AE000511">
    <property type="protein sequence ID" value="AAD07964.1"/>
    <property type="molecule type" value="Genomic_DNA"/>
</dbReference>
<dbReference type="PIR" id="H64634">
    <property type="entry name" value="H64634"/>
</dbReference>
<dbReference type="RefSeq" id="NP_207712.1">
    <property type="nucleotide sequence ID" value="NC_000915.1"/>
</dbReference>
<dbReference type="RefSeq" id="WP_001240277.1">
    <property type="nucleotide sequence ID" value="NC_018939.1"/>
</dbReference>
<dbReference type="SMR" id="O25578"/>
<dbReference type="DIP" id="DIP-3284N"/>
<dbReference type="FunCoup" id="O25578">
    <property type="interactions" value="129"/>
</dbReference>
<dbReference type="IntAct" id="O25578">
    <property type="interactions" value="2"/>
</dbReference>
<dbReference type="MINT" id="O25578"/>
<dbReference type="STRING" id="85962.HP_0920"/>
<dbReference type="PaxDb" id="85962-C694_04735"/>
<dbReference type="EnsemblBacteria" id="AAD07964">
    <property type="protein sequence ID" value="AAD07964"/>
    <property type="gene ID" value="HP_0920"/>
</dbReference>
<dbReference type="KEGG" id="heo:C694_04735"/>
<dbReference type="KEGG" id="hpy:HP_0920"/>
<dbReference type="PATRIC" id="fig|85962.47.peg.985"/>
<dbReference type="eggNOG" id="COG0670">
    <property type="taxonomic scope" value="Bacteria"/>
</dbReference>
<dbReference type="InParanoid" id="O25578"/>
<dbReference type="OrthoDB" id="9793828at2"/>
<dbReference type="PhylomeDB" id="O25578"/>
<dbReference type="Proteomes" id="UP000000429">
    <property type="component" value="Chromosome"/>
</dbReference>
<dbReference type="GO" id="GO:0005886">
    <property type="term" value="C:plasma membrane"/>
    <property type="evidence" value="ECO:0000318"/>
    <property type="project" value="GO_Central"/>
</dbReference>
<dbReference type="GO" id="GO:0005262">
    <property type="term" value="F:calcium channel activity"/>
    <property type="evidence" value="ECO:0000318"/>
    <property type="project" value="GO_Central"/>
</dbReference>
<dbReference type="GO" id="GO:0030162">
    <property type="term" value="P:regulation of proteolysis"/>
    <property type="evidence" value="ECO:0000318"/>
    <property type="project" value="GO_Central"/>
</dbReference>
<dbReference type="CDD" id="cd10432">
    <property type="entry name" value="BI-1-like_bacterial"/>
    <property type="match status" value="1"/>
</dbReference>
<dbReference type="InterPro" id="IPR006214">
    <property type="entry name" value="Bax_inhibitor_1-related"/>
</dbReference>
<dbReference type="PANTHER" id="PTHR23291">
    <property type="entry name" value="BAX INHIBITOR-RELATED"/>
    <property type="match status" value="1"/>
</dbReference>
<dbReference type="PANTHER" id="PTHR23291:SF115">
    <property type="entry name" value="MODULATOR OF FTSH PROTEASE YCCA"/>
    <property type="match status" value="1"/>
</dbReference>
<dbReference type="Pfam" id="PF01027">
    <property type="entry name" value="Bax1-I"/>
    <property type="match status" value="1"/>
</dbReference>
<protein>
    <recommendedName>
        <fullName>Uncharacterized protein HP_0920</fullName>
    </recommendedName>
</protein>
<evidence type="ECO:0000255" key="1"/>
<evidence type="ECO:0000305" key="2"/>
<reference key="1">
    <citation type="journal article" date="1997" name="Nature">
        <title>The complete genome sequence of the gastric pathogen Helicobacter pylori.</title>
        <authorList>
            <person name="Tomb J.-F."/>
            <person name="White O."/>
            <person name="Kerlavage A.R."/>
            <person name="Clayton R.A."/>
            <person name="Sutton G.G."/>
            <person name="Fleischmann R.D."/>
            <person name="Ketchum K.A."/>
            <person name="Klenk H.-P."/>
            <person name="Gill S.R."/>
            <person name="Dougherty B.A."/>
            <person name="Nelson K.E."/>
            <person name="Quackenbush J."/>
            <person name="Zhou L."/>
            <person name="Kirkness E.F."/>
            <person name="Peterson S.N."/>
            <person name="Loftus B.J."/>
            <person name="Richardson D.L."/>
            <person name="Dodson R.J."/>
            <person name="Khalak H.G."/>
            <person name="Glodek A."/>
            <person name="McKenney K."/>
            <person name="FitzGerald L.M."/>
            <person name="Lee N."/>
            <person name="Adams M.D."/>
            <person name="Hickey E.K."/>
            <person name="Berg D.E."/>
            <person name="Gocayne J.D."/>
            <person name="Utterback T.R."/>
            <person name="Peterson J.D."/>
            <person name="Kelley J.M."/>
            <person name="Cotton M.D."/>
            <person name="Weidman J.F."/>
            <person name="Fujii C."/>
            <person name="Bowman C."/>
            <person name="Watthey L."/>
            <person name="Wallin E."/>
            <person name="Hayes W.S."/>
            <person name="Borodovsky M."/>
            <person name="Karp P.D."/>
            <person name="Smith H.O."/>
            <person name="Fraser C.M."/>
            <person name="Venter J.C."/>
        </authorList>
    </citation>
    <scope>NUCLEOTIDE SEQUENCE [LARGE SCALE GENOMIC DNA]</scope>
    <source>
        <strain>ATCC 700392 / 26695</strain>
    </source>
</reference>
<gene>
    <name type="ordered locus">HP_0920</name>
</gene>
<organism>
    <name type="scientific">Helicobacter pylori (strain ATCC 700392 / 26695)</name>
    <name type="common">Campylobacter pylori</name>
    <dbReference type="NCBI Taxonomy" id="85962"/>
    <lineage>
        <taxon>Bacteria</taxon>
        <taxon>Pseudomonadati</taxon>
        <taxon>Campylobacterota</taxon>
        <taxon>Epsilonproteobacteria</taxon>
        <taxon>Campylobacterales</taxon>
        <taxon>Helicobacteraceae</taxon>
        <taxon>Helicobacter</taxon>
    </lineage>
</organism>
<proteinExistence type="inferred from homology"/>
<comment type="subcellular location">
    <subcellularLocation>
        <location evidence="2">Cell membrane</location>
        <topology evidence="2">Multi-pass membrane protein</topology>
    </subcellularLocation>
</comment>
<comment type="similarity">
    <text evidence="2">Belongs to the BI1 family.</text>
</comment>